<gene>
    <name evidence="1" type="primary">pqiC</name>
    <name type="synonym">ymbA</name>
    <name type="ordered locus">SF0953</name>
    <name type="ordered locus">S1018</name>
</gene>
<comment type="function">
    <text evidence="1">Component of a transport pathway that contributes to membrane integrity.</text>
</comment>
<comment type="subunit">
    <text evidence="1">May form a complex composed of PqiA, PqiB and PqiC. Interacts with PqiB.</text>
</comment>
<comment type="subcellular location">
    <subcellularLocation>
        <location evidence="1">Cell outer membrane</location>
        <topology evidence="2">Lipid-anchor</topology>
        <orientation evidence="1">Periplasmic side</orientation>
    </subcellularLocation>
</comment>
<keyword id="KW-0998">Cell outer membrane</keyword>
<keyword id="KW-0449">Lipoprotein</keyword>
<keyword id="KW-0472">Membrane</keyword>
<keyword id="KW-0564">Palmitate</keyword>
<keyword id="KW-1185">Reference proteome</keyword>
<keyword id="KW-0732">Signal</keyword>
<protein>
    <recommendedName>
        <fullName evidence="1">Intermembrane transport lipoprotein PqiC</fullName>
    </recommendedName>
</protein>
<proteinExistence type="inferred from homology"/>
<reference key="1">
    <citation type="journal article" date="2002" name="Nucleic Acids Res.">
        <title>Genome sequence of Shigella flexneri 2a: insights into pathogenicity through comparison with genomes of Escherichia coli K12 and O157.</title>
        <authorList>
            <person name="Jin Q."/>
            <person name="Yuan Z."/>
            <person name="Xu J."/>
            <person name="Wang Y."/>
            <person name="Shen Y."/>
            <person name="Lu W."/>
            <person name="Wang J."/>
            <person name="Liu H."/>
            <person name="Yang J."/>
            <person name="Yang F."/>
            <person name="Zhang X."/>
            <person name="Zhang J."/>
            <person name="Yang G."/>
            <person name="Wu H."/>
            <person name="Qu D."/>
            <person name="Dong J."/>
            <person name="Sun L."/>
            <person name="Xue Y."/>
            <person name="Zhao A."/>
            <person name="Gao Y."/>
            <person name="Zhu J."/>
            <person name="Kan B."/>
            <person name="Ding K."/>
            <person name="Chen S."/>
            <person name="Cheng H."/>
            <person name="Yao Z."/>
            <person name="He B."/>
            <person name="Chen R."/>
            <person name="Ma D."/>
            <person name="Qiang B."/>
            <person name="Wen Y."/>
            <person name="Hou Y."/>
            <person name="Yu J."/>
        </authorList>
    </citation>
    <scope>NUCLEOTIDE SEQUENCE [LARGE SCALE GENOMIC DNA]</scope>
    <source>
        <strain>301 / Serotype 2a</strain>
    </source>
</reference>
<reference key="2">
    <citation type="journal article" date="2003" name="Infect. Immun.">
        <title>Complete genome sequence and comparative genomics of Shigella flexneri serotype 2a strain 2457T.</title>
        <authorList>
            <person name="Wei J."/>
            <person name="Goldberg M.B."/>
            <person name="Burland V."/>
            <person name="Venkatesan M.M."/>
            <person name="Deng W."/>
            <person name="Fournier G."/>
            <person name="Mayhew G.F."/>
            <person name="Plunkett G. III"/>
            <person name="Rose D.J."/>
            <person name="Darling A."/>
            <person name="Mau B."/>
            <person name="Perna N.T."/>
            <person name="Payne S.M."/>
            <person name="Runyen-Janecky L.J."/>
            <person name="Zhou S."/>
            <person name="Schwartz D.C."/>
            <person name="Blattner F.R."/>
        </authorList>
    </citation>
    <scope>NUCLEOTIDE SEQUENCE [LARGE SCALE GENOMIC DNA]</scope>
    <source>
        <strain>ATCC 700930 / 2457T / Serotype 2a</strain>
    </source>
</reference>
<dbReference type="EMBL" id="AE005674">
    <property type="protein sequence ID" value="AAN42582.1"/>
    <property type="molecule type" value="Genomic_DNA"/>
</dbReference>
<dbReference type="EMBL" id="AE014073">
    <property type="protein sequence ID" value="AAP16466.1"/>
    <property type="molecule type" value="Genomic_DNA"/>
</dbReference>
<dbReference type="RefSeq" id="NP_706875.1">
    <property type="nucleotide sequence ID" value="NC_004337.2"/>
</dbReference>
<dbReference type="RefSeq" id="WP_000759120.1">
    <property type="nucleotide sequence ID" value="NZ_WPGW01000054.1"/>
</dbReference>
<dbReference type="SMR" id="P0AB11"/>
<dbReference type="STRING" id="198214.SF0953"/>
<dbReference type="PaxDb" id="198214-SF0953"/>
<dbReference type="GeneID" id="1027561"/>
<dbReference type="GeneID" id="75204043"/>
<dbReference type="KEGG" id="sfl:SF0953"/>
<dbReference type="KEGG" id="sfx:S1018"/>
<dbReference type="PATRIC" id="fig|198214.7.peg.1110"/>
<dbReference type="HOGENOM" id="CLU_096001_3_2_6"/>
<dbReference type="Proteomes" id="UP000001006">
    <property type="component" value="Chromosome"/>
</dbReference>
<dbReference type="Proteomes" id="UP000002673">
    <property type="component" value="Chromosome"/>
</dbReference>
<dbReference type="GO" id="GO:0009279">
    <property type="term" value="C:cell outer membrane"/>
    <property type="evidence" value="ECO:0007669"/>
    <property type="project" value="UniProtKB-SubCell"/>
</dbReference>
<dbReference type="FunFam" id="3.40.50.10610:FF:000004">
    <property type="entry name" value="Putative lipoprotein YmbA"/>
    <property type="match status" value="1"/>
</dbReference>
<dbReference type="Gene3D" id="3.40.50.10610">
    <property type="entry name" value="ABC-type transport auxiliary lipoprotein component"/>
    <property type="match status" value="1"/>
</dbReference>
<dbReference type="InterPro" id="IPR005586">
    <property type="entry name" value="ABC_trans_aux"/>
</dbReference>
<dbReference type="InterPro" id="IPR049736">
    <property type="entry name" value="PqiC"/>
</dbReference>
<dbReference type="NCBIfam" id="NF033620">
    <property type="entry name" value="pqiC"/>
    <property type="match status" value="1"/>
</dbReference>
<dbReference type="Pfam" id="PF03886">
    <property type="entry name" value="ABC_trans_aux"/>
    <property type="match status" value="1"/>
</dbReference>
<dbReference type="SUPFAM" id="SSF159594">
    <property type="entry name" value="XCC0632-like"/>
    <property type="match status" value="1"/>
</dbReference>
<dbReference type="PROSITE" id="PS51257">
    <property type="entry name" value="PROKAR_LIPOPROTEIN"/>
    <property type="match status" value="1"/>
</dbReference>
<organism>
    <name type="scientific">Shigella flexneri</name>
    <dbReference type="NCBI Taxonomy" id="623"/>
    <lineage>
        <taxon>Bacteria</taxon>
        <taxon>Pseudomonadati</taxon>
        <taxon>Pseudomonadota</taxon>
        <taxon>Gammaproteobacteria</taxon>
        <taxon>Enterobacterales</taxon>
        <taxon>Enterobacteriaceae</taxon>
        <taxon>Shigella</taxon>
    </lineage>
</organism>
<evidence type="ECO:0000250" key="1">
    <source>
        <dbReference type="UniProtKB" id="P0AB10"/>
    </source>
</evidence>
<evidence type="ECO:0000255" key="2">
    <source>
        <dbReference type="PROSITE-ProRule" id="PRU00303"/>
    </source>
</evidence>
<name>PQIC_SHIFL</name>
<sequence>MKKWLVTIAALWLAGCSSGEINKNYYQLPVVQSGTQSTASQGNRLLWVEQVTVPDYLAGNGVVYQTSDVKYVIANNNLWASPLDQQLRNTLVANLSTQLPGWVVASQPLGSAQDTLNVTVTEFNGRYDGKVIVSGEWLLNHQGQLIKRPFRLEGVQTQDGYDEMVKVLAGVWSQEAASIAQEIKRLP</sequence>
<accession>P0AB11</accession>
<accession>P75866</accession>
<accession>Q9R7Q4</accession>
<feature type="signal peptide" evidence="2">
    <location>
        <begin position="1"/>
        <end position="15"/>
    </location>
</feature>
<feature type="chain" id="PRO_0000168780" description="Intermembrane transport lipoprotein PqiC">
    <location>
        <begin position="16"/>
        <end position="187"/>
    </location>
</feature>
<feature type="lipid moiety-binding region" description="N-palmitoyl cysteine" evidence="2">
    <location>
        <position position="16"/>
    </location>
</feature>
<feature type="lipid moiety-binding region" description="S-diacylglycerol cysteine" evidence="2">
    <location>
        <position position="16"/>
    </location>
</feature>